<protein>
    <recommendedName>
        <fullName evidence="1">Met repressor</fullName>
    </recommendedName>
    <alternativeName>
        <fullName evidence="1">Met regulon regulatory protein MetJ</fullName>
    </alternativeName>
</protein>
<proteinExistence type="inferred from homology"/>
<reference key="1">
    <citation type="journal article" date="2005" name="Nucleic Acids Res.">
        <title>Genome dynamics and diversity of Shigella species, the etiologic agents of bacillary dysentery.</title>
        <authorList>
            <person name="Yang F."/>
            <person name="Yang J."/>
            <person name="Zhang X."/>
            <person name="Chen L."/>
            <person name="Jiang Y."/>
            <person name="Yan Y."/>
            <person name="Tang X."/>
            <person name="Wang J."/>
            <person name="Xiong Z."/>
            <person name="Dong J."/>
            <person name="Xue Y."/>
            <person name="Zhu Y."/>
            <person name="Xu X."/>
            <person name="Sun L."/>
            <person name="Chen S."/>
            <person name="Nie H."/>
            <person name="Peng J."/>
            <person name="Xu J."/>
            <person name="Wang Y."/>
            <person name="Yuan Z."/>
            <person name="Wen Y."/>
            <person name="Yao Z."/>
            <person name="Shen Y."/>
            <person name="Qiang B."/>
            <person name="Hou Y."/>
            <person name="Yu J."/>
            <person name="Jin Q."/>
        </authorList>
    </citation>
    <scope>NUCLEOTIDE SEQUENCE [LARGE SCALE GENOMIC DNA]</scope>
    <source>
        <strain>Ss046</strain>
    </source>
</reference>
<sequence length="105" mass="12141">MAEWSGEYISPYAEHGKKSEQVKKITVSIPLKVLKILTDERTRRQVNNLRHATNSELLCEAFLHAFTGQPLPDDADLRKERSDEIPEAAKEIMREMGINPETWEY</sequence>
<feature type="chain" id="PRO_1000046498" description="Met repressor">
    <location>
        <begin position="1"/>
        <end position="105"/>
    </location>
</feature>
<gene>
    <name evidence="1" type="primary">metJ</name>
    <name type="ordered locus">SSON_4112</name>
</gene>
<name>METJ_SHISS</name>
<accession>Q3YV35</accession>
<dbReference type="EMBL" id="CP000038">
    <property type="protein sequence ID" value="AAZ90627.1"/>
    <property type="molecule type" value="Genomic_DNA"/>
</dbReference>
<dbReference type="RefSeq" id="WP_000852812.1">
    <property type="nucleotide sequence ID" value="NC_007384.1"/>
</dbReference>
<dbReference type="SMR" id="Q3YV35"/>
<dbReference type="GeneID" id="93777954"/>
<dbReference type="KEGG" id="ssn:SSON_4112"/>
<dbReference type="HOGENOM" id="CLU_142318_0_0_6"/>
<dbReference type="Proteomes" id="UP000002529">
    <property type="component" value="Chromosome"/>
</dbReference>
<dbReference type="GO" id="GO:0005737">
    <property type="term" value="C:cytoplasm"/>
    <property type="evidence" value="ECO:0007669"/>
    <property type="project" value="UniProtKB-SubCell"/>
</dbReference>
<dbReference type="GO" id="GO:0003677">
    <property type="term" value="F:DNA binding"/>
    <property type="evidence" value="ECO:0007669"/>
    <property type="project" value="UniProtKB-KW"/>
</dbReference>
<dbReference type="GO" id="GO:0003700">
    <property type="term" value="F:DNA-binding transcription factor activity"/>
    <property type="evidence" value="ECO:0007669"/>
    <property type="project" value="InterPro"/>
</dbReference>
<dbReference type="GO" id="GO:0009086">
    <property type="term" value="P:methionine biosynthetic process"/>
    <property type="evidence" value="ECO:0007669"/>
    <property type="project" value="UniProtKB-UniRule"/>
</dbReference>
<dbReference type="GO" id="GO:0045892">
    <property type="term" value="P:negative regulation of DNA-templated transcription"/>
    <property type="evidence" value="ECO:0007669"/>
    <property type="project" value="UniProtKB-UniRule"/>
</dbReference>
<dbReference type="CDD" id="cd00490">
    <property type="entry name" value="Met_repressor_MetJ"/>
    <property type="match status" value="1"/>
</dbReference>
<dbReference type="FunFam" id="1.10.140.10:FF:000001">
    <property type="entry name" value="Met repressor"/>
    <property type="match status" value="1"/>
</dbReference>
<dbReference type="Gene3D" id="1.10.140.10">
    <property type="entry name" value="MET Apo-Repressor, subunit A"/>
    <property type="match status" value="1"/>
</dbReference>
<dbReference type="HAMAP" id="MF_00744">
    <property type="entry name" value="MetJ"/>
    <property type="match status" value="1"/>
</dbReference>
<dbReference type="InterPro" id="IPR002084">
    <property type="entry name" value="Met_repressor_MetJ"/>
</dbReference>
<dbReference type="InterPro" id="IPR023453">
    <property type="entry name" value="Met_repressor_MetJ_dom_sf"/>
</dbReference>
<dbReference type="InterPro" id="IPR010985">
    <property type="entry name" value="Ribbon_hlx_hlx"/>
</dbReference>
<dbReference type="NCBIfam" id="NF003622">
    <property type="entry name" value="PRK05264.1"/>
    <property type="match status" value="1"/>
</dbReference>
<dbReference type="Pfam" id="PF01340">
    <property type="entry name" value="MetJ"/>
    <property type="match status" value="1"/>
</dbReference>
<dbReference type="SUPFAM" id="SSF47598">
    <property type="entry name" value="Ribbon-helix-helix"/>
    <property type="match status" value="1"/>
</dbReference>
<comment type="function">
    <text evidence="1">This regulatory protein, when combined with SAM (S-adenosylmethionine) represses the expression of the methionine regulon and of enzymes involved in SAM synthesis.</text>
</comment>
<comment type="subunit">
    <text evidence="1">Homodimer.</text>
</comment>
<comment type="subcellular location">
    <subcellularLocation>
        <location evidence="1">Cytoplasm</location>
    </subcellularLocation>
</comment>
<comment type="domain">
    <text>Does not bind DNA by a helix-turn-helix motif.</text>
</comment>
<comment type="similarity">
    <text evidence="1">Belongs to the MetJ family.</text>
</comment>
<keyword id="KW-0028">Amino-acid biosynthesis</keyword>
<keyword id="KW-0963">Cytoplasm</keyword>
<keyword id="KW-0238">DNA-binding</keyword>
<keyword id="KW-0486">Methionine biosynthesis</keyword>
<keyword id="KW-1185">Reference proteome</keyword>
<keyword id="KW-0678">Repressor</keyword>
<keyword id="KW-0804">Transcription</keyword>
<keyword id="KW-0805">Transcription regulation</keyword>
<evidence type="ECO:0000255" key="1">
    <source>
        <dbReference type="HAMAP-Rule" id="MF_00744"/>
    </source>
</evidence>
<organism>
    <name type="scientific">Shigella sonnei (strain Ss046)</name>
    <dbReference type="NCBI Taxonomy" id="300269"/>
    <lineage>
        <taxon>Bacteria</taxon>
        <taxon>Pseudomonadati</taxon>
        <taxon>Pseudomonadota</taxon>
        <taxon>Gammaproteobacteria</taxon>
        <taxon>Enterobacterales</taxon>
        <taxon>Enterobacteriaceae</taxon>
        <taxon>Shigella</taxon>
    </lineage>
</organism>